<feature type="chain" id="PRO_0000089376" description="Cobalt transport protein CbiQ">
    <location>
        <begin position="1"/>
        <end position="225"/>
    </location>
</feature>
<feature type="transmembrane region" description="Helical" evidence="1">
    <location>
        <begin position="22"/>
        <end position="42"/>
    </location>
</feature>
<feature type="transmembrane region" description="Helical" evidence="1">
    <location>
        <begin position="65"/>
        <end position="85"/>
    </location>
</feature>
<feature type="transmembrane region" description="Helical" evidence="1">
    <location>
        <begin position="90"/>
        <end position="110"/>
    </location>
</feature>
<feature type="transmembrane region" description="Helical" evidence="1">
    <location>
        <begin position="122"/>
        <end position="142"/>
    </location>
</feature>
<feature type="transmembrane region" description="Helical" evidence="1">
    <location>
        <begin position="150"/>
        <end position="170"/>
    </location>
</feature>
<feature type="sequence conflict" description="In Ref. 1; AAA27266." evidence="3" ref="1">
    <original>G</original>
    <variation>R</variation>
    <location>
        <position position="71"/>
    </location>
</feature>
<organism>
    <name type="scientific">Salmonella typhimurium (strain LT2 / SGSC1412 / ATCC 700720)</name>
    <dbReference type="NCBI Taxonomy" id="99287"/>
    <lineage>
        <taxon>Bacteria</taxon>
        <taxon>Pseudomonadati</taxon>
        <taxon>Pseudomonadota</taxon>
        <taxon>Gammaproteobacteria</taxon>
        <taxon>Enterobacterales</taxon>
        <taxon>Enterobacteriaceae</taxon>
        <taxon>Salmonella</taxon>
    </lineage>
</organism>
<sequence>MTGLDRLSYQSRWAHVAPQRKFLLWLAMMILAFVLPPVGQGIELLIIAGLSCWLLRISLWRWCRWMAIPFGFLLVGVITIIFSISREPQMLLAGISVGPYWIGITRAGVVTANETFWRSLTALSATLWLVMNLPFPQLISLLKRAHIPRLLTEQILLTWRFLFILLDEAVAIRRAQTLRFGYCSLPNGYRSLAMLAGLLFTRVLMRYQQMTTTLDIKLYQGDFHL</sequence>
<name>CBIQ_SALTY</name>
<accession>Q05598</accession>
<protein>
    <recommendedName>
        <fullName>Cobalt transport protein CbiQ</fullName>
    </recommendedName>
    <alternativeName>
        <fullName>Energy-coupling factor transporter transmembrane protein CbiQ</fullName>
        <shortName>ECF transporter T component CbiQ</shortName>
    </alternativeName>
</protein>
<evidence type="ECO:0000255" key="1"/>
<evidence type="ECO:0000269" key="2">
    <source>
    </source>
</evidence>
<evidence type="ECO:0000305" key="3"/>
<keyword id="KW-0997">Cell inner membrane</keyword>
<keyword id="KW-1003">Cell membrane</keyword>
<keyword id="KW-0169">Cobalamin biosynthesis</keyword>
<keyword id="KW-0170">Cobalt</keyword>
<keyword id="KW-0171">Cobalt transport</keyword>
<keyword id="KW-0406">Ion transport</keyword>
<keyword id="KW-0472">Membrane</keyword>
<keyword id="KW-1185">Reference proteome</keyword>
<keyword id="KW-0812">Transmembrane</keyword>
<keyword id="KW-1133">Transmembrane helix</keyword>
<keyword id="KW-0813">Transport</keyword>
<proteinExistence type="evidence at protein level"/>
<reference key="1">
    <citation type="journal article" date="1993" name="J. Bacteriol.">
        <title>Characterization of the cobalamin (vitamin B12) biosynthetic genes of Salmonella typhimurium.</title>
        <authorList>
            <person name="Roth J.R."/>
            <person name="Lawrence J.G."/>
            <person name="Rubenfield M."/>
            <person name="Kieffer-Higgins S."/>
            <person name="Church G.M."/>
        </authorList>
    </citation>
    <scope>NUCLEOTIDE SEQUENCE [GENOMIC DNA]</scope>
    <source>
        <strain>LT2</strain>
    </source>
</reference>
<reference key="2">
    <citation type="journal article" date="2001" name="Nature">
        <title>Complete genome sequence of Salmonella enterica serovar Typhimurium LT2.</title>
        <authorList>
            <person name="McClelland M."/>
            <person name="Sanderson K.E."/>
            <person name="Spieth J."/>
            <person name="Clifton S.W."/>
            <person name="Latreille P."/>
            <person name="Courtney L."/>
            <person name="Porwollik S."/>
            <person name="Ali J."/>
            <person name="Dante M."/>
            <person name="Du F."/>
            <person name="Hou S."/>
            <person name="Layman D."/>
            <person name="Leonard S."/>
            <person name="Nguyen C."/>
            <person name="Scott K."/>
            <person name="Holmes A."/>
            <person name="Grewal N."/>
            <person name="Mulvaney E."/>
            <person name="Ryan E."/>
            <person name="Sun H."/>
            <person name="Florea L."/>
            <person name="Miller W."/>
            <person name="Stoneking T."/>
            <person name="Nhan M."/>
            <person name="Waterston R."/>
            <person name="Wilson R.K."/>
        </authorList>
    </citation>
    <scope>NUCLEOTIDE SEQUENCE [LARGE SCALE GENOMIC DNA]</scope>
    <source>
        <strain>LT2 / SGSC1412 / ATCC 700720</strain>
    </source>
</reference>
<reference key="3">
    <citation type="journal article" date="2006" name="J. Bacteriol.">
        <title>Comparative and functional genomic analysis of prokaryotic nickel and cobalt uptake transporters: evidence for a novel group of ATP-binding cassette transporters.</title>
        <authorList>
            <person name="Rodionov D.A."/>
            <person name="Hebbeln P."/>
            <person name="Gelfand M.S."/>
            <person name="Eitinger T."/>
        </authorList>
    </citation>
    <scope>FUNCTION IN COBALT TRANSPORT</scope>
    <scope>SUBSTRATES</scope>
    <scope>SUBUNIT</scope>
    <scope>EXPRESSION IN E.COLI</scope>
    <source>
        <strain>LT2 / SGSC1412 / ATCC 700720</strain>
    </source>
</reference>
<comment type="function">
    <text evidence="2">Part of the energy-coupling factor (ECF) transporter complex CbiMNOQ involved in cobalt import. The complex confers cobalt uptake upon expression in E.coli; can also transport nickel with a very low affinity.</text>
</comment>
<comment type="pathway">
    <text>Cofactor biosynthesis; adenosylcobalamin biosynthesis.</text>
</comment>
<comment type="subunit">
    <text evidence="2">Forms an energy-coupling factor (ECF) transporter complex composed of an ATP-binding protein (A component, CbiO), a transmembrane protein (T component, CbiQ) and 2 possible substrate-capture proteins (S components, CbiM and CbiN) of unknown stoichimetry. Expression of just CbiMN in E.coli confers some cobalt uptake.</text>
</comment>
<comment type="subcellular location">
    <subcellularLocation>
        <location evidence="3">Cell inner membrane</location>
        <topology evidence="3">Multi-pass membrane protein</topology>
    </subcellularLocation>
</comment>
<comment type="similarity">
    <text evidence="3">Belongs to the CbiQ family.</text>
</comment>
<gene>
    <name type="primary">cbiQ</name>
    <name type="ordered locus">STM2021</name>
</gene>
<dbReference type="EMBL" id="L12006">
    <property type="protein sequence ID" value="AAA27266.1"/>
    <property type="molecule type" value="Genomic_DNA"/>
</dbReference>
<dbReference type="EMBL" id="AE006468">
    <property type="protein sequence ID" value="AAL20925.1"/>
    <property type="molecule type" value="Genomic_DNA"/>
</dbReference>
<dbReference type="RefSeq" id="WP_000147137.1">
    <property type="nucleotide sequence ID" value="NC_003197.2"/>
</dbReference>
<dbReference type="SMR" id="Q05598"/>
<dbReference type="STRING" id="99287.STM2021"/>
<dbReference type="TCDB" id="3.A.1.23.6">
    <property type="family name" value="the atp-binding cassette (abc) superfamily"/>
</dbReference>
<dbReference type="PaxDb" id="99287-STM2021"/>
<dbReference type="KEGG" id="stm:STM2021"/>
<dbReference type="PATRIC" id="fig|99287.12.peg.2143"/>
<dbReference type="HOGENOM" id="CLU_056469_5_3_6"/>
<dbReference type="OMA" id="ALVTYRM"/>
<dbReference type="PhylomeDB" id="Q05598"/>
<dbReference type="BioCyc" id="SENT99287:STM2021-MONOMER"/>
<dbReference type="UniPathway" id="UPA00148"/>
<dbReference type="Proteomes" id="UP000001014">
    <property type="component" value="Chromosome"/>
</dbReference>
<dbReference type="GO" id="GO:0043190">
    <property type="term" value="C:ATP-binding cassette (ABC) transporter complex"/>
    <property type="evidence" value="ECO:0000314"/>
    <property type="project" value="UniProtKB"/>
</dbReference>
<dbReference type="GO" id="GO:0009236">
    <property type="term" value="P:cobalamin biosynthetic process"/>
    <property type="evidence" value="ECO:0007669"/>
    <property type="project" value="UniProtKB-UniPathway"/>
</dbReference>
<dbReference type="GO" id="GO:0006824">
    <property type="term" value="P:cobalt ion transport"/>
    <property type="evidence" value="ECO:0000314"/>
    <property type="project" value="UniProtKB"/>
</dbReference>
<dbReference type="CDD" id="cd16914">
    <property type="entry name" value="EcfT"/>
    <property type="match status" value="1"/>
</dbReference>
<dbReference type="InterPro" id="IPR003339">
    <property type="entry name" value="ABC/ECF_trnsptr_transmembrane"/>
</dbReference>
<dbReference type="InterPro" id="IPR052770">
    <property type="entry name" value="Cobalt_transport_CbiQ"/>
</dbReference>
<dbReference type="InterPro" id="IPR012809">
    <property type="entry name" value="ECF_CbiQ"/>
</dbReference>
<dbReference type="NCBIfam" id="TIGR02454">
    <property type="entry name" value="ECF_T_CbiQ"/>
    <property type="match status" value="1"/>
</dbReference>
<dbReference type="NCBIfam" id="NF012029">
    <property type="entry name" value="PRK15485.1"/>
    <property type="match status" value="1"/>
</dbReference>
<dbReference type="PANTHER" id="PTHR43723">
    <property type="entry name" value="COBALT TRANSPORT PROTEIN CBIQ"/>
    <property type="match status" value="1"/>
</dbReference>
<dbReference type="PANTHER" id="PTHR43723:SF1">
    <property type="entry name" value="COBALT TRANSPORT PROTEIN CBIQ"/>
    <property type="match status" value="1"/>
</dbReference>
<dbReference type="Pfam" id="PF02361">
    <property type="entry name" value="CbiQ"/>
    <property type="match status" value="1"/>
</dbReference>